<gene>
    <name evidence="5" type="primary">swnH1</name>
    <name type="ORF">MAA_08618</name>
</gene>
<comment type="function">
    <text evidence="3 4 8">Dioxygenase; part of the gene cluster that mediates the biosynthesis of swainsonine (SW), a cytotoxic fungal alkaloid and a potential cancer therapy drug (PubMed:28381497, PubMed:32786262). Swainsonine production occurs via a multibranched pathway and is dispensable for fungal colonization of plants and infection of insect hosts (PubMed:32786262). The first step of swainsonine biosynthesis is the production of the precursor pipecolic acid (PA) via conversion of L-lysine (Lys) to 1-piperideine-6-carboxylate (P6C) by the aminotransferase swnA, the latter being further reduced to PA by the reductase swnR (PubMed:32786262). PA can be converted from lysine by both the SW biosynthetic cluster and the unclustered genes such as lysine cyclodeaminase (PubMed:32786262). The PKS-NRPS hybrid synthetase swnK uptakes and condensates PA and malonyl-CoA with and without skipping of the ketoreductase (KR) domain in order to produce 3 intermediates, 1-oxoindolizidine, (1S)-1-hydroxyindolizin, and (1R)-1-hydroxyindolizine; with the transisomer (1S)-1-hydroxyindolizin being predominant (PubMed:32786262). The terminal thioester reductase (TE) domain of swnK is involved in reduction of the thioester bond to release the intermediate aldehydes (PubMed:32786262). The oxidoreductase swnN could contribute to the reduction of 1-oxoindolizidine to (1S)-1-hydroxyindolizin and (1R)-1-hydroxyindolizine, contributing to the major route of SW production (Probable). The dioxygenase swnH2 would be responsible for the oxidization of (1R)-1-hydroxyindolizine into (1R,2S)-1,2-dihydroxyindolizine and of (1S)-1-hydroxyindolizin to yield both (1R,2S)-1,2-dihydroxyindolizine and (1S,2S)-1,2-dihydroxyindolizine (PubMed:32786262). The dioxygenase swnH1 then performs the conversion of the 1,2-dihydroxyindolizine epimers to SW (PubMed:32786262).</text>
</comment>
<comment type="cofactor">
    <cofactor evidence="2">
        <name>Fe cation</name>
        <dbReference type="ChEBI" id="CHEBI:24875"/>
    </cofactor>
</comment>
<comment type="pathway">
    <text evidence="4">Mycotoxin biosynthesis.</text>
</comment>
<comment type="subunit">
    <text evidence="2">Homodimer.</text>
</comment>
<comment type="disruption phenotype">
    <text evidence="4">Abolishes the production of swainsonine but still produces the 1,2-dihydroxyindolizine epimers intermediates.</text>
</comment>
<comment type="similarity">
    <text evidence="6">Belongs to the PhyH family.</text>
</comment>
<feature type="chain" id="PRO_0000441182" description="Dioxygenase swnH1">
    <location>
        <begin position="1"/>
        <end position="307"/>
    </location>
</feature>
<feature type="binding site" evidence="1">
    <location>
        <position position="149"/>
    </location>
    <ligand>
        <name>Fe cation</name>
        <dbReference type="ChEBI" id="CHEBI:24875"/>
    </ligand>
</feature>
<feature type="binding site" evidence="1">
    <location>
        <position position="151"/>
    </location>
    <ligand>
        <name>Fe cation</name>
        <dbReference type="ChEBI" id="CHEBI:24875"/>
    </ligand>
</feature>
<feature type="binding site" evidence="1">
    <location>
        <position position="227"/>
    </location>
    <ligand>
        <name>Fe cation</name>
        <dbReference type="ChEBI" id="CHEBI:24875"/>
    </ligand>
</feature>
<sequence length="307" mass="33725">MGAFPPPIDPSYIPSVSLTRLPATAPTADIIATLERDGALILVDLVSPQDVAAINAEIEPYIQKARAESHEAYDLIPKQTIMVPGVVGKSPTMARMAELDVIDTLRTRVLQRKCTATWEDRTEDFSIDPLLNSSLTYHISYGGPRQRLHRDDMIHGIYHRGGEYRLSDETMLGFMIAGSKTTRENGATMAIPGSHKWDHARVPRVDEVCFAEMEPGSALVFLGTVYHGAGHNSVPDQVRKIYGLFFIPGTLRPEENQFLAIPRSKVLGMSDKMLSLLGYKKPGTWLGIVNNGDPAENLAEVLGMANS</sequence>
<dbReference type="EC" id="1.14.11.-" evidence="7"/>
<dbReference type="EMBL" id="ADNJ02000001">
    <property type="protein sequence ID" value="EFY95965.1"/>
    <property type="molecule type" value="Genomic_DNA"/>
</dbReference>
<dbReference type="RefSeq" id="XP_007824807.1">
    <property type="nucleotide sequence ID" value="XM_007826616.1"/>
</dbReference>
<dbReference type="SMR" id="E9F8L9"/>
<dbReference type="GeneID" id="19262904"/>
<dbReference type="KEGG" id="maj:MAA_08618"/>
<dbReference type="HOGENOM" id="CLU_047725_0_0_1"/>
<dbReference type="OrthoDB" id="445007at2759"/>
<dbReference type="Proteomes" id="UP000002498">
    <property type="component" value="Unassembled WGS sequence"/>
</dbReference>
<dbReference type="GO" id="GO:0051213">
    <property type="term" value="F:dioxygenase activity"/>
    <property type="evidence" value="ECO:0007669"/>
    <property type="project" value="UniProtKB-KW"/>
</dbReference>
<dbReference type="GO" id="GO:0046872">
    <property type="term" value="F:metal ion binding"/>
    <property type="evidence" value="ECO:0007669"/>
    <property type="project" value="UniProtKB-KW"/>
</dbReference>
<dbReference type="Gene3D" id="2.60.120.620">
    <property type="entry name" value="q2cbj1_9rhob like domain"/>
    <property type="match status" value="1"/>
</dbReference>
<dbReference type="InterPro" id="IPR008775">
    <property type="entry name" value="Phytyl_CoA_dOase-like"/>
</dbReference>
<dbReference type="PANTHER" id="PTHR20883">
    <property type="entry name" value="PHYTANOYL-COA DIOXYGENASE DOMAIN CONTAINING 1"/>
    <property type="match status" value="1"/>
</dbReference>
<dbReference type="PANTHER" id="PTHR20883:SF45">
    <property type="entry name" value="PHYTANOYL-COA DIOXYGENASE FAMILY PROTEIN"/>
    <property type="match status" value="1"/>
</dbReference>
<dbReference type="Pfam" id="PF05721">
    <property type="entry name" value="PhyH"/>
    <property type="match status" value="1"/>
</dbReference>
<dbReference type="SUPFAM" id="SSF51197">
    <property type="entry name" value="Clavaminate synthase-like"/>
    <property type="match status" value="1"/>
</dbReference>
<organism>
    <name type="scientific">Metarhizium robertsii (strain ARSEF 23 / ATCC MYA-3075)</name>
    <name type="common">Metarhizium anisopliae (strain ARSEF 23)</name>
    <dbReference type="NCBI Taxonomy" id="655844"/>
    <lineage>
        <taxon>Eukaryota</taxon>
        <taxon>Fungi</taxon>
        <taxon>Dikarya</taxon>
        <taxon>Ascomycota</taxon>
        <taxon>Pezizomycotina</taxon>
        <taxon>Sordariomycetes</taxon>
        <taxon>Hypocreomycetidae</taxon>
        <taxon>Hypocreales</taxon>
        <taxon>Clavicipitaceae</taxon>
        <taxon>Metarhizium</taxon>
    </lineage>
</organism>
<protein>
    <recommendedName>
        <fullName evidence="5">Dioxygenase swnH1</fullName>
        <ecNumber evidence="7">1.14.11.-</ecNumber>
    </recommendedName>
    <alternativeName>
        <fullName evidence="5">Swainsonine biosynthesis gene cluster protein H1</fullName>
    </alternativeName>
</protein>
<proteinExistence type="inferred from homology"/>
<reference key="1">
    <citation type="journal article" date="2011" name="PLoS Genet.">
        <title>Genome sequencing and comparative transcriptomics of the model entomopathogenic fungi Metarhizium anisopliae and M. acridum.</title>
        <authorList>
            <person name="Gao Q."/>
            <person name="Jin K."/>
            <person name="Ying S.-H."/>
            <person name="Zhang Y."/>
            <person name="Xiao G."/>
            <person name="Shang Y."/>
            <person name="Duan Z."/>
            <person name="Hu X."/>
            <person name="Xie X.-Q."/>
            <person name="Zhou G."/>
            <person name="Peng G."/>
            <person name="Luo Z."/>
            <person name="Huang W."/>
            <person name="Wang B."/>
            <person name="Fang W."/>
            <person name="Wang S."/>
            <person name="Zhong Y."/>
            <person name="Ma L.-J."/>
            <person name="St Leger R.J."/>
            <person name="Zhao G.-P."/>
            <person name="Pei Y."/>
            <person name="Feng M.-G."/>
            <person name="Xia Y."/>
            <person name="Wang C."/>
        </authorList>
    </citation>
    <scope>NUCLEOTIDE SEQUENCE [LARGE SCALE GENOMIC DNA]</scope>
    <source>
        <strain>ARSEF 23 / ATCC MYA-3075</strain>
    </source>
</reference>
<reference key="2">
    <citation type="journal article" date="2014" name="Proc. Natl. Acad. Sci. U.S.A.">
        <title>Trajectory and genomic determinants of fungal-pathogen speciation and host adaptation.</title>
        <authorList>
            <person name="Hu X."/>
            <person name="Xiao G."/>
            <person name="Zheng P."/>
            <person name="Shang Y."/>
            <person name="Su Y."/>
            <person name="Zhang X."/>
            <person name="Liu X."/>
            <person name="Zhan S."/>
            <person name="St Leger R.J."/>
            <person name="Wang C."/>
        </authorList>
    </citation>
    <scope>GENOME REANNOTATION</scope>
    <source>
        <strain>ARSEF 23 / ATCC MYA-3075</strain>
    </source>
</reference>
<reference key="3">
    <citation type="journal article" date="2017" name="G3 (Bethesda)">
        <title>Swainsonine biosynthesis genes in diverse symbiotic and pathogenic fungi.</title>
        <authorList>
            <person name="Cook D."/>
            <person name="Donzelli B.G."/>
            <person name="Creamer R."/>
            <person name="Baucom D.L."/>
            <person name="Gardner D.R."/>
            <person name="Pan J."/>
            <person name="Moore N."/>
            <person name="Jaromczyk J.W."/>
            <person name="Schardl C.L."/>
        </authorList>
    </citation>
    <scope>FUNCTION</scope>
    <scope>PATHWAY</scope>
</reference>
<reference key="4">
    <citation type="journal article" date="2020" name="ACS Chem. Biol.">
        <title>Unveiling of Swainsonine Biosynthesis via a Multibranched Pathway in Fungi.</title>
        <authorList>
            <person name="Luo F."/>
            <person name="Hong S."/>
            <person name="Chen B."/>
            <person name="Yin Y."/>
            <person name="Tang G."/>
            <person name="Hu F."/>
            <person name="Zhang H."/>
            <person name="Wang C."/>
        </authorList>
    </citation>
    <scope>FUNCTION</scope>
    <scope>DISRUPTION PHENOTYPE</scope>
    <scope>PATHWAY</scope>
</reference>
<evidence type="ECO:0000250" key="1">
    <source>
        <dbReference type="UniProtKB" id="O14832"/>
    </source>
</evidence>
<evidence type="ECO:0000250" key="2">
    <source>
        <dbReference type="UniProtKB" id="Q4WAW9"/>
    </source>
</evidence>
<evidence type="ECO:0000269" key="3">
    <source>
    </source>
</evidence>
<evidence type="ECO:0000269" key="4">
    <source>
    </source>
</evidence>
<evidence type="ECO:0000303" key="5">
    <source>
    </source>
</evidence>
<evidence type="ECO:0000305" key="6"/>
<evidence type="ECO:0000305" key="7">
    <source>
    </source>
</evidence>
<evidence type="ECO:0000305" key="8">
    <source>
    </source>
</evidence>
<name>SWNH1_METRA</name>
<keyword id="KW-0223">Dioxygenase</keyword>
<keyword id="KW-0408">Iron</keyword>
<keyword id="KW-0479">Metal-binding</keyword>
<keyword id="KW-0560">Oxidoreductase</keyword>
<accession>E9F8L9</accession>